<keyword id="KW-0108">Calcium channel impairing toxin</keyword>
<keyword id="KW-1015">Disulfide bond</keyword>
<keyword id="KW-0872">Ion channel impairing toxin</keyword>
<keyword id="KW-0960">Knottin</keyword>
<keyword id="KW-0528">Neurotoxin</keyword>
<keyword id="KW-0638">Presynaptic neurotoxin</keyword>
<keyword id="KW-0964">Secreted</keyword>
<keyword id="KW-0732">Signal</keyword>
<keyword id="KW-0800">Toxin</keyword>
<keyword id="KW-1218">Voltage-gated calcium channel impairing toxin</keyword>
<comment type="function">
    <text evidence="1">Omega-conotoxins act at presynaptic membranes, they bind and block voltage-gated calcium channels (Cav).</text>
</comment>
<comment type="subcellular location">
    <subcellularLocation>
        <location evidence="1">Secreted</location>
    </subcellularLocation>
</comment>
<comment type="tissue specificity">
    <text>Expressed by the venom duct.</text>
</comment>
<comment type="domain">
    <text evidence="1">The presence of a 'disulfide through disulfide knot' structurally defines this protein as a knottin.</text>
</comment>
<comment type="domain">
    <text>The cysteine framework is VI/VII (C-C-CC-C-C).</text>
</comment>
<comment type="similarity">
    <text evidence="3">Belongs to the conotoxin O1 superfamily.</text>
</comment>
<proteinExistence type="evidence at transcript level"/>
<protein>
    <recommendedName>
        <fullName>Omega-conotoxin-like SO-5</fullName>
        <shortName>Omega-conotoxin SO5</shortName>
    </recommendedName>
</protein>
<gene>
    <name type="primary">SO5</name>
</gene>
<name>O165_CONST</name>
<evidence type="ECO:0000250" key="1"/>
<evidence type="ECO:0000255" key="2"/>
<evidence type="ECO:0000305" key="3"/>
<feature type="signal peptide" evidence="2">
    <location>
        <begin position="1"/>
        <end position="22"/>
    </location>
</feature>
<feature type="propeptide" id="PRO_0000034936" evidence="1">
    <location>
        <begin position="23"/>
        <end position="42"/>
    </location>
</feature>
<feature type="peptide" id="PRO_0000034937" description="Omega-conotoxin-like SO-5">
    <location>
        <begin position="43"/>
        <end position="77"/>
    </location>
</feature>
<feature type="disulfide bond" evidence="1">
    <location>
        <begin position="46"/>
        <end position="61"/>
    </location>
</feature>
<feature type="disulfide bond" evidence="1">
    <location>
        <begin position="53"/>
        <end position="64"/>
    </location>
</feature>
<feature type="disulfide bond" evidence="1">
    <location>
        <begin position="60"/>
        <end position="71"/>
    </location>
</feature>
<sequence length="77" mass="8372">MKLTCVMIVAVLLLTACQLITADDSRGTQKHRSLRSTTKVSKSTSCMEAGSYCGSTTRICCGYCAYFGKKCIDYPSN</sequence>
<accession>Q9XZK4</accession>
<dbReference type="EMBL" id="AF146350">
    <property type="protein sequence ID" value="AAD31910.1"/>
    <property type="molecule type" value="mRNA"/>
</dbReference>
<dbReference type="SMR" id="Q9XZK4"/>
<dbReference type="ConoServer" id="866">
    <property type="toxin name" value="SO5 precursor"/>
</dbReference>
<dbReference type="GO" id="GO:0005576">
    <property type="term" value="C:extracellular region"/>
    <property type="evidence" value="ECO:0007669"/>
    <property type="project" value="UniProtKB-SubCell"/>
</dbReference>
<dbReference type="GO" id="GO:0044231">
    <property type="term" value="C:host cell presynaptic membrane"/>
    <property type="evidence" value="ECO:0007669"/>
    <property type="project" value="UniProtKB-KW"/>
</dbReference>
<dbReference type="GO" id="GO:0005246">
    <property type="term" value="F:calcium channel regulator activity"/>
    <property type="evidence" value="ECO:0007669"/>
    <property type="project" value="UniProtKB-KW"/>
</dbReference>
<dbReference type="GO" id="GO:0008200">
    <property type="term" value="F:ion channel inhibitor activity"/>
    <property type="evidence" value="ECO:0007669"/>
    <property type="project" value="InterPro"/>
</dbReference>
<dbReference type="GO" id="GO:0090729">
    <property type="term" value="F:toxin activity"/>
    <property type="evidence" value="ECO:0007669"/>
    <property type="project" value="UniProtKB-KW"/>
</dbReference>
<dbReference type="InterPro" id="IPR004214">
    <property type="entry name" value="Conotoxin"/>
</dbReference>
<dbReference type="InterPro" id="IPR012321">
    <property type="entry name" value="Conotoxin_omega-typ_CS"/>
</dbReference>
<dbReference type="Pfam" id="PF02950">
    <property type="entry name" value="Conotoxin"/>
    <property type="match status" value="1"/>
</dbReference>
<dbReference type="PROSITE" id="PS60004">
    <property type="entry name" value="OMEGA_CONOTOXIN"/>
    <property type="match status" value="1"/>
</dbReference>
<organism>
    <name type="scientific">Conus striatus</name>
    <name type="common">Striated cone</name>
    <dbReference type="NCBI Taxonomy" id="6493"/>
    <lineage>
        <taxon>Eukaryota</taxon>
        <taxon>Metazoa</taxon>
        <taxon>Spiralia</taxon>
        <taxon>Lophotrochozoa</taxon>
        <taxon>Mollusca</taxon>
        <taxon>Gastropoda</taxon>
        <taxon>Caenogastropoda</taxon>
        <taxon>Neogastropoda</taxon>
        <taxon>Conoidea</taxon>
        <taxon>Conidae</taxon>
        <taxon>Conus</taxon>
        <taxon>Pionoconus</taxon>
    </lineage>
</organism>
<reference key="1">
    <citation type="journal article" date="1999" name="Peptides">
        <title>Conopeptides from Conus striatus and Conus textile by cDNA cloning.</title>
        <authorList>
            <person name="Lu B.-S."/>
            <person name="Yu F."/>
            <person name="Zhao D."/>
            <person name="Huang P.-T."/>
            <person name="Huang C.-F."/>
        </authorList>
    </citation>
    <scope>NUCLEOTIDE SEQUENCE [MRNA]</scope>
    <source>
        <tissue>Venom duct</tissue>
    </source>
</reference>